<organism>
    <name type="scientific">Bordetella petrii (strain ATCC BAA-461 / DSM 12804 / CCUG 43448)</name>
    <dbReference type="NCBI Taxonomy" id="340100"/>
    <lineage>
        <taxon>Bacteria</taxon>
        <taxon>Pseudomonadati</taxon>
        <taxon>Pseudomonadota</taxon>
        <taxon>Betaproteobacteria</taxon>
        <taxon>Burkholderiales</taxon>
        <taxon>Alcaligenaceae</taxon>
        <taxon>Bordetella</taxon>
    </lineage>
</organism>
<dbReference type="EC" id="1.1.1.86" evidence="1"/>
<dbReference type="EMBL" id="AM902716">
    <property type="protein sequence ID" value="CAP41945.1"/>
    <property type="molecule type" value="Genomic_DNA"/>
</dbReference>
<dbReference type="SMR" id="A9IGJ3"/>
<dbReference type="STRING" id="94624.Bpet1606"/>
<dbReference type="KEGG" id="bpt:Bpet1606"/>
<dbReference type="eggNOG" id="COG0059">
    <property type="taxonomic scope" value="Bacteria"/>
</dbReference>
<dbReference type="UniPathway" id="UPA00047">
    <property type="reaction ID" value="UER00056"/>
</dbReference>
<dbReference type="UniPathway" id="UPA00049">
    <property type="reaction ID" value="UER00060"/>
</dbReference>
<dbReference type="Proteomes" id="UP000001225">
    <property type="component" value="Chromosome"/>
</dbReference>
<dbReference type="GO" id="GO:0005829">
    <property type="term" value="C:cytosol"/>
    <property type="evidence" value="ECO:0007669"/>
    <property type="project" value="TreeGrafter"/>
</dbReference>
<dbReference type="GO" id="GO:0004455">
    <property type="term" value="F:ketol-acid reductoisomerase activity"/>
    <property type="evidence" value="ECO:0007669"/>
    <property type="project" value="UniProtKB-UniRule"/>
</dbReference>
<dbReference type="GO" id="GO:0000287">
    <property type="term" value="F:magnesium ion binding"/>
    <property type="evidence" value="ECO:0007669"/>
    <property type="project" value="UniProtKB-UniRule"/>
</dbReference>
<dbReference type="GO" id="GO:0050661">
    <property type="term" value="F:NADP binding"/>
    <property type="evidence" value="ECO:0007669"/>
    <property type="project" value="InterPro"/>
</dbReference>
<dbReference type="GO" id="GO:0009097">
    <property type="term" value="P:isoleucine biosynthetic process"/>
    <property type="evidence" value="ECO:0007669"/>
    <property type="project" value="UniProtKB-UniRule"/>
</dbReference>
<dbReference type="GO" id="GO:0009099">
    <property type="term" value="P:L-valine biosynthetic process"/>
    <property type="evidence" value="ECO:0007669"/>
    <property type="project" value="UniProtKB-UniRule"/>
</dbReference>
<dbReference type="FunFam" id="3.40.50.720:FF:000023">
    <property type="entry name" value="Ketol-acid reductoisomerase (NADP(+))"/>
    <property type="match status" value="1"/>
</dbReference>
<dbReference type="Gene3D" id="6.10.240.10">
    <property type="match status" value="1"/>
</dbReference>
<dbReference type="Gene3D" id="3.40.50.720">
    <property type="entry name" value="NAD(P)-binding Rossmann-like Domain"/>
    <property type="match status" value="1"/>
</dbReference>
<dbReference type="HAMAP" id="MF_00435">
    <property type="entry name" value="IlvC"/>
    <property type="match status" value="1"/>
</dbReference>
<dbReference type="InterPro" id="IPR008927">
    <property type="entry name" value="6-PGluconate_DH-like_C_sf"/>
</dbReference>
<dbReference type="InterPro" id="IPR013023">
    <property type="entry name" value="KARI"/>
</dbReference>
<dbReference type="InterPro" id="IPR000506">
    <property type="entry name" value="KARI_C"/>
</dbReference>
<dbReference type="InterPro" id="IPR013116">
    <property type="entry name" value="KARI_N"/>
</dbReference>
<dbReference type="InterPro" id="IPR014359">
    <property type="entry name" value="KARI_prok"/>
</dbReference>
<dbReference type="InterPro" id="IPR036291">
    <property type="entry name" value="NAD(P)-bd_dom_sf"/>
</dbReference>
<dbReference type="NCBIfam" id="TIGR00465">
    <property type="entry name" value="ilvC"/>
    <property type="match status" value="1"/>
</dbReference>
<dbReference type="NCBIfam" id="NF004017">
    <property type="entry name" value="PRK05479.1"/>
    <property type="match status" value="1"/>
</dbReference>
<dbReference type="NCBIfam" id="NF009940">
    <property type="entry name" value="PRK13403.1"/>
    <property type="match status" value="1"/>
</dbReference>
<dbReference type="PANTHER" id="PTHR21371">
    <property type="entry name" value="KETOL-ACID REDUCTOISOMERASE, MITOCHONDRIAL"/>
    <property type="match status" value="1"/>
</dbReference>
<dbReference type="PANTHER" id="PTHR21371:SF1">
    <property type="entry name" value="KETOL-ACID REDUCTOISOMERASE, MITOCHONDRIAL"/>
    <property type="match status" value="1"/>
</dbReference>
<dbReference type="Pfam" id="PF01450">
    <property type="entry name" value="KARI_C"/>
    <property type="match status" value="1"/>
</dbReference>
<dbReference type="Pfam" id="PF07991">
    <property type="entry name" value="KARI_N"/>
    <property type="match status" value="1"/>
</dbReference>
<dbReference type="PIRSF" id="PIRSF000116">
    <property type="entry name" value="IlvC_gammaproteo"/>
    <property type="match status" value="1"/>
</dbReference>
<dbReference type="SUPFAM" id="SSF48179">
    <property type="entry name" value="6-phosphogluconate dehydrogenase C-terminal domain-like"/>
    <property type="match status" value="1"/>
</dbReference>
<dbReference type="SUPFAM" id="SSF51735">
    <property type="entry name" value="NAD(P)-binding Rossmann-fold domains"/>
    <property type="match status" value="1"/>
</dbReference>
<dbReference type="PROSITE" id="PS51851">
    <property type="entry name" value="KARI_C"/>
    <property type="match status" value="1"/>
</dbReference>
<dbReference type="PROSITE" id="PS51850">
    <property type="entry name" value="KARI_N"/>
    <property type="match status" value="1"/>
</dbReference>
<proteinExistence type="inferred from homology"/>
<reference key="1">
    <citation type="journal article" date="2008" name="BMC Genomics">
        <title>The missing link: Bordetella petrii is endowed with both the metabolic versatility of environmental bacteria and virulence traits of pathogenic Bordetellae.</title>
        <authorList>
            <person name="Gross R."/>
            <person name="Guzman C.A."/>
            <person name="Sebaihia M."/>
            <person name="Martin dos Santos V.A.P."/>
            <person name="Pieper D.H."/>
            <person name="Koebnik R."/>
            <person name="Lechner M."/>
            <person name="Bartels D."/>
            <person name="Buhrmester J."/>
            <person name="Choudhuri J.V."/>
            <person name="Ebensen T."/>
            <person name="Gaigalat L."/>
            <person name="Herrmann S."/>
            <person name="Khachane A.N."/>
            <person name="Larisch C."/>
            <person name="Link S."/>
            <person name="Linke B."/>
            <person name="Meyer F."/>
            <person name="Mormann S."/>
            <person name="Nakunst D."/>
            <person name="Rueckert C."/>
            <person name="Schneiker-Bekel S."/>
            <person name="Schulze K."/>
            <person name="Voerholter F.-J."/>
            <person name="Yevsa T."/>
            <person name="Engle J.T."/>
            <person name="Goldman W.E."/>
            <person name="Puehler A."/>
            <person name="Goebel U.B."/>
            <person name="Goesmann A."/>
            <person name="Bloecker H."/>
            <person name="Kaiser O."/>
            <person name="Martinez-Arias R."/>
        </authorList>
    </citation>
    <scope>NUCLEOTIDE SEQUENCE [LARGE SCALE GENOMIC DNA]</scope>
    <source>
        <strain>ATCC BAA-461 / DSM 12804 / CCUG 43448</strain>
    </source>
</reference>
<accession>A9IGJ3</accession>
<sequence length="338" mass="36247">MKVFYDKDCDLSLVKGKTVAIIGYGSQGHAHALNLHDSGVKVVVGLRKGGASWNKAANAGLEVKEVAEAVKVADVVMMLLPDENIAAVYRNEVHANIKAGAALAFAHGFNVHYGQVVPRDDIDVIMIAPKAPGHTVRSTYTQGGGVPHLVAVHQDKSGSARDVALSYASANGGGRAGIIETDFREETETDLFGEQAVLCGGTVELIKAGFDTLVEAGYAPEMAYFECLHELKLIVDLIYEGGIANMNYSISNNAEFGEYETGPKIVTEQTRQAMRDALVAIQTGEYAKKFILENAAGAPTLTSRRRINAESQIEQVGGKLRAMMPWIAANKLVDKSKN</sequence>
<evidence type="ECO:0000255" key="1">
    <source>
        <dbReference type="HAMAP-Rule" id="MF_00435"/>
    </source>
</evidence>
<evidence type="ECO:0000255" key="2">
    <source>
        <dbReference type="PROSITE-ProRule" id="PRU01197"/>
    </source>
</evidence>
<evidence type="ECO:0000255" key="3">
    <source>
        <dbReference type="PROSITE-ProRule" id="PRU01198"/>
    </source>
</evidence>
<protein>
    <recommendedName>
        <fullName evidence="1">Ketol-acid reductoisomerase (NADP(+))</fullName>
        <shortName evidence="1">KARI</shortName>
        <ecNumber evidence="1">1.1.1.86</ecNumber>
    </recommendedName>
    <alternativeName>
        <fullName evidence="1">Acetohydroxy-acid isomeroreductase</fullName>
        <shortName evidence="1">AHIR</shortName>
    </alternativeName>
    <alternativeName>
        <fullName evidence="1">Alpha-keto-beta-hydroxylacyl reductoisomerase</fullName>
    </alternativeName>
    <alternativeName>
        <fullName evidence="1">Ketol-acid reductoisomerase type 1</fullName>
    </alternativeName>
    <alternativeName>
        <fullName evidence="1">Ketol-acid reductoisomerase type I</fullName>
    </alternativeName>
</protein>
<comment type="function">
    <text evidence="1">Involved in the biosynthesis of branched-chain amino acids (BCAA). Catalyzes an alkyl-migration followed by a ketol-acid reduction of (S)-2-acetolactate (S2AL) to yield (R)-2,3-dihydroxy-isovalerate. In the isomerase reaction, S2AL is rearranged via a Mg-dependent methyl migration to produce 3-hydroxy-3-methyl-2-ketobutyrate (HMKB). In the reductase reaction, this 2-ketoacid undergoes a metal-dependent reduction by NADPH to yield (R)-2,3-dihydroxy-isovalerate.</text>
</comment>
<comment type="catalytic activity">
    <reaction evidence="1">
        <text>(2R)-2,3-dihydroxy-3-methylbutanoate + NADP(+) = (2S)-2-acetolactate + NADPH + H(+)</text>
        <dbReference type="Rhea" id="RHEA:22068"/>
        <dbReference type="ChEBI" id="CHEBI:15378"/>
        <dbReference type="ChEBI" id="CHEBI:49072"/>
        <dbReference type="ChEBI" id="CHEBI:57783"/>
        <dbReference type="ChEBI" id="CHEBI:58349"/>
        <dbReference type="ChEBI" id="CHEBI:58476"/>
        <dbReference type="EC" id="1.1.1.86"/>
    </reaction>
</comment>
<comment type="catalytic activity">
    <reaction evidence="1">
        <text>(2R,3R)-2,3-dihydroxy-3-methylpentanoate + NADP(+) = (S)-2-ethyl-2-hydroxy-3-oxobutanoate + NADPH + H(+)</text>
        <dbReference type="Rhea" id="RHEA:13493"/>
        <dbReference type="ChEBI" id="CHEBI:15378"/>
        <dbReference type="ChEBI" id="CHEBI:49256"/>
        <dbReference type="ChEBI" id="CHEBI:49258"/>
        <dbReference type="ChEBI" id="CHEBI:57783"/>
        <dbReference type="ChEBI" id="CHEBI:58349"/>
        <dbReference type="EC" id="1.1.1.86"/>
    </reaction>
</comment>
<comment type="cofactor">
    <cofactor evidence="1">
        <name>Mg(2+)</name>
        <dbReference type="ChEBI" id="CHEBI:18420"/>
    </cofactor>
    <text evidence="1">Binds 2 magnesium ions per subunit.</text>
</comment>
<comment type="pathway">
    <text evidence="1">Amino-acid biosynthesis; L-isoleucine biosynthesis; L-isoleucine from 2-oxobutanoate: step 2/4.</text>
</comment>
<comment type="pathway">
    <text evidence="1">Amino-acid biosynthesis; L-valine biosynthesis; L-valine from pyruvate: step 2/4.</text>
</comment>
<comment type="similarity">
    <text evidence="1">Belongs to the ketol-acid reductoisomerase family.</text>
</comment>
<name>ILVC_BORPD</name>
<gene>
    <name evidence="1" type="primary">ilvC</name>
    <name type="ordered locus">Bpet1606</name>
</gene>
<feature type="chain" id="PRO_1000190912" description="Ketol-acid reductoisomerase (NADP(+))">
    <location>
        <begin position="1"/>
        <end position="338"/>
    </location>
</feature>
<feature type="domain" description="KARI N-terminal Rossmann" evidence="2">
    <location>
        <begin position="1"/>
        <end position="181"/>
    </location>
</feature>
<feature type="domain" description="KARI C-terminal knotted" evidence="3">
    <location>
        <begin position="182"/>
        <end position="327"/>
    </location>
</feature>
<feature type="active site" evidence="1">
    <location>
        <position position="107"/>
    </location>
</feature>
<feature type="binding site" evidence="1">
    <location>
        <begin position="24"/>
        <end position="27"/>
    </location>
    <ligand>
        <name>NADP(+)</name>
        <dbReference type="ChEBI" id="CHEBI:58349"/>
    </ligand>
</feature>
<feature type="binding site" evidence="1">
    <location>
        <position position="47"/>
    </location>
    <ligand>
        <name>NADP(+)</name>
        <dbReference type="ChEBI" id="CHEBI:58349"/>
    </ligand>
</feature>
<feature type="binding site" evidence="1">
    <location>
        <position position="52"/>
    </location>
    <ligand>
        <name>NADP(+)</name>
        <dbReference type="ChEBI" id="CHEBI:58349"/>
    </ligand>
</feature>
<feature type="binding site" evidence="1">
    <location>
        <position position="133"/>
    </location>
    <ligand>
        <name>NADP(+)</name>
        <dbReference type="ChEBI" id="CHEBI:58349"/>
    </ligand>
</feature>
<feature type="binding site" evidence="1">
    <location>
        <position position="190"/>
    </location>
    <ligand>
        <name>Mg(2+)</name>
        <dbReference type="ChEBI" id="CHEBI:18420"/>
        <label>1</label>
    </ligand>
</feature>
<feature type="binding site" evidence="1">
    <location>
        <position position="190"/>
    </location>
    <ligand>
        <name>Mg(2+)</name>
        <dbReference type="ChEBI" id="CHEBI:18420"/>
        <label>2</label>
    </ligand>
</feature>
<feature type="binding site" evidence="1">
    <location>
        <position position="194"/>
    </location>
    <ligand>
        <name>Mg(2+)</name>
        <dbReference type="ChEBI" id="CHEBI:18420"/>
        <label>1</label>
    </ligand>
</feature>
<feature type="binding site" evidence="1">
    <location>
        <position position="226"/>
    </location>
    <ligand>
        <name>Mg(2+)</name>
        <dbReference type="ChEBI" id="CHEBI:18420"/>
        <label>2</label>
    </ligand>
</feature>
<feature type="binding site" evidence="1">
    <location>
        <position position="230"/>
    </location>
    <ligand>
        <name>Mg(2+)</name>
        <dbReference type="ChEBI" id="CHEBI:18420"/>
        <label>2</label>
    </ligand>
</feature>
<feature type="binding site" evidence="1">
    <location>
        <position position="251"/>
    </location>
    <ligand>
        <name>substrate</name>
    </ligand>
</feature>
<keyword id="KW-0028">Amino-acid biosynthesis</keyword>
<keyword id="KW-0100">Branched-chain amino acid biosynthesis</keyword>
<keyword id="KW-0460">Magnesium</keyword>
<keyword id="KW-0479">Metal-binding</keyword>
<keyword id="KW-0521">NADP</keyword>
<keyword id="KW-0560">Oxidoreductase</keyword>